<proteinExistence type="inferred from homology"/>
<sequence length="417" mass="45317">MLKREMNIADYDAELWQAMEQEKVRQEEHIELIASENYTSPRVMQAQGSQLTNKYAEGYPGKRYYGGCEYVDIVEQLAIDRAKELFGADYANVQPHSGSQANFAVYTALLEPGDTVLGMNLAHGGHLTHGSPVNFSGKLYNIVPYGIDATGHIDYADLEKQAKEHKPKMIIGGFSAYSGVVDWAKMREIADSIGAYLFVDMAHVAGLVAAGVYPNPVPHAHVVTTTTHKTLAGPRGGLILAKGGSEELYKKLNSAVFPGGQGGPLMHVIAGKAVALKEAMEPEFKTYQQQVAKNAKAMVEVFLERGYKVVSGGTDNHLFLVDLVDKNLTGKEADAALGRANITVNKNSVPNDPKSPFVTSGIRVGTPAITRRGFKEAEAKELAGWMCDVLDSINDEAVIERIKGKVLDICARYPVYA</sequence>
<name>GLYA_ECOL5</name>
<gene>
    <name evidence="1" type="primary">glyA</name>
    <name type="ordered locus">ECP_2552</name>
</gene>
<evidence type="ECO:0000255" key="1">
    <source>
        <dbReference type="HAMAP-Rule" id="MF_00051"/>
    </source>
</evidence>
<protein>
    <recommendedName>
        <fullName evidence="1">Serine hydroxymethyltransferase</fullName>
        <shortName evidence="1">SHMT</shortName>
        <shortName evidence="1">Serine methylase</shortName>
        <ecNumber evidence="1">2.1.2.1</ecNumber>
    </recommendedName>
</protein>
<accession>Q0TET8</accession>
<comment type="function">
    <text evidence="1">Catalyzes the reversible interconversion of serine and glycine with tetrahydrofolate (THF) serving as the one-carbon carrier. This reaction serves as the major source of one-carbon groups required for the biosynthesis of purines, thymidylate, methionine, and other important biomolecules. Also exhibits THF-independent aldolase activity toward beta-hydroxyamino acids, producing glycine and aldehydes, via a retro-aldol mechanism.</text>
</comment>
<comment type="catalytic activity">
    <reaction evidence="1">
        <text>(6R)-5,10-methylene-5,6,7,8-tetrahydrofolate + glycine + H2O = (6S)-5,6,7,8-tetrahydrofolate + L-serine</text>
        <dbReference type="Rhea" id="RHEA:15481"/>
        <dbReference type="ChEBI" id="CHEBI:15377"/>
        <dbReference type="ChEBI" id="CHEBI:15636"/>
        <dbReference type="ChEBI" id="CHEBI:33384"/>
        <dbReference type="ChEBI" id="CHEBI:57305"/>
        <dbReference type="ChEBI" id="CHEBI:57453"/>
        <dbReference type="EC" id="2.1.2.1"/>
    </reaction>
</comment>
<comment type="cofactor">
    <cofactor evidence="1">
        <name>pyridoxal 5'-phosphate</name>
        <dbReference type="ChEBI" id="CHEBI:597326"/>
    </cofactor>
</comment>
<comment type="pathway">
    <text evidence="1">One-carbon metabolism; tetrahydrofolate interconversion.</text>
</comment>
<comment type="pathway">
    <text evidence="1">Amino-acid biosynthesis; glycine biosynthesis; glycine from L-serine: step 1/1.</text>
</comment>
<comment type="subunit">
    <text evidence="1">Homodimer.</text>
</comment>
<comment type="subcellular location">
    <subcellularLocation>
        <location evidence="1">Cytoplasm</location>
    </subcellularLocation>
</comment>
<comment type="similarity">
    <text evidence="1">Belongs to the SHMT family.</text>
</comment>
<keyword id="KW-0007">Acetylation</keyword>
<keyword id="KW-0028">Amino-acid biosynthesis</keyword>
<keyword id="KW-0963">Cytoplasm</keyword>
<keyword id="KW-0554">One-carbon metabolism</keyword>
<keyword id="KW-0663">Pyridoxal phosphate</keyword>
<keyword id="KW-0808">Transferase</keyword>
<feature type="chain" id="PRO_1000006246" description="Serine hydroxymethyltransferase">
    <location>
        <begin position="1"/>
        <end position="417"/>
    </location>
</feature>
<feature type="binding site" evidence="1">
    <location>
        <position position="121"/>
    </location>
    <ligand>
        <name>(6S)-5,6,7,8-tetrahydrofolate</name>
        <dbReference type="ChEBI" id="CHEBI:57453"/>
    </ligand>
</feature>
<feature type="binding site" evidence="1">
    <location>
        <begin position="125"/>
        <end position="127"/>
    </location>
    <ligand>
        <name>(6S)-5,6,7,8-tetrahydrofolate</name>
        <dbReference type="ChEBI" id="CHEBI:57453"/>
    </ligand>
</feature>
<feature type="binding site" evidence="1">
    <location>
        <begin position="355"/>
        <end position="357"/>
    </location>
    <ligand>
        <name>(6S)-5,6,7,8-tetrahydrofolate</name>
        <dbReference type="ChEBI" id="CHEBI:57453"/>
    </ligand>
</feature>
<feature type="site" description="Plays an important role in substrate specificity" evidence="1">
    <location>
        <position position="228"/>
    </location>
</feature>
<feature type="modified residue" description="N6-acetyllysine" evidence="1">
    <location>
        <position position="54"/>
    </location>
</feature>
<feature type="modified residue" description="N6-(pyridoxal phosphate)lysine" evidence="1">
    <location>
        <position position="229"/>
    </location>
</feature>
<feature type="modified residue" description="N6-acetyllysine" evidence="1">
    <location>
        <position position="250"/>
    </location>
</feature>
<feature type="modified residue" description="N6-acetyllysine" evidence="1">
    <location>
        <position position="285"/>
    </location>
</feature>
<feature type="modified residue" description="N6-acetyllysine" evidence="1">
    <location>
        <position position="354"/>
    </location>
</feature>
<feature type="modified residue" description="N6-acetyllysine" evidence="1">
    <location>
        <position position="375"/>
    </location>
</feature>
<reference key="1">
    <citation type="journal article" date="2006" name="Mol. Microbiol.">
        <title>Role of pathogenicity island-associated integrases in the genome plasticity of uropathogenic Escherichia coli strain 536.</title>
        <authorList>
            <person name="Hochhut B."/>
            <person name="Wilde C."/>
            <person name="Balling G."/>
            <person name="Middendorf B."/>
            <person name="Dobrindt U."/>
            <person name="Brzuszkiewicz E."/>
            <person name="Gottschalk G."/>
            <person name="Carniel E."/>
            <person name="Hacker J."/>
        </authorList>
    </citation>
    <scope>NUCLEOTIDE SEQUENCE [LARGE SCALE GENOMIC DNA]</scope>
    <source>
        <strain>536 / UPEC</strain>
    </source>
</reference>
<dbReference type="EC" id="2.1.2.1" evidence="1"/>
<dbReference type="EMBL" id="CP000247">
    <property type="protein sequence ID" value="ABG70541.1"/>
    <property type="molecule type" value="Genomic_DNA"/>
</dbReference>
<dbReference type="RefSeq" id="WP_000919159.1">
    <property type="nucleotide sequence ID" value="NC_008253.1"/>
</dbReference>
<dbReference type="SMR" id="Q0TET8"/>
<dbReference type="GeneID" id="89517346"/>
<dbReference type="KEGG" id="ecp:ECP_2552"/>
<dbReference type="HOGENOM" id="CLU_022477_2_1_6"/>
<dbReference type="UniPathway" id="UPA00193"/>
<dbReference type="UniPathway" id="UPA00288">
    <property type="reaction ID" value="UER01023"/>
</dbReference>
<dbReference type="Proteomes" id="UP000009182">
    <property type="component" value="Chromosome"/>
</dbReference>
<dbReference type="GO" id="GO:0005829">
    <property type="term" value="C:cytosol"/>
    <property type="evidence" value="ECO:0007669"/>
    <property type="project" value="TreeGrafter"/>
</dbReference>
<dbReference type="GO" id="GO:0004372">
    <property type="term" value="F:glycine hydroxymethyltransferase activity"/>
    <property type="evidence" value="ECO:0007669"/>
    <property type="project" value="UniProtKB-UniRule"/>
</dbReference>
<dbReference type="GO" id="GO:0030170">
    <property type="term" value="F:pyridoxal phosphate binding"/>
    <property type="evidence" value="ECO:0007669"/>
    <property type="project" value="UniProtKB-UniRule"/>
</dbReference>
<dbReference type="GO" id="GO:0019264">
    <property type="term" value="P:glycine biosynthetic process from serine"/>
    <property type="evidence" value="ECO:0007669"/>
    <property type="project" value="UniProtKB-UniRule"/>
</dbReference>
<dbReference type="GO" id="GO:0035999">
    <property type="term" value="P:tetrahydrofolate interconversion"/>
    <property type="evidence" value="ECO:0007669"/>
    <property type="project" value="UniProtKB-UniRule"/>
</dbReference>
<dbReference type="CDD" id="cd00378">
    <property type="entry name" value="SHMT"/>
    <property type="match status" value="1"/>
</dbReference>
<dbReference type="FunFam" id="3.40.640.10:FF:000001">
    <property type="entry name" value="Serine hydroxymethyltransferase"/>
    <property type="match status" value="1"/>
</dbReference>
<dbReference type="FunFam" id="3.90.1150.10:FF:000003">
    <property type="entry name" value="Serine hydroxymethyltransferase"/>
    <property type="match status" value="1"/>
</dbReference>
<dbReference type="Gene3D" id="3.90.1150.10">
    <property type="entry name" value="Aspartate Aminotransferase, domain 1"/>
    <property type="match status" value="1"/>
</dbReference>
<dbReference type="Gene3D" id="3.40.640.10">
    <property type="entry name" value="Type I PLP-dependent aspartate aminotransferase-like (Major domain)"/>
    <property type="match status" value="1"/>
</dbReference>
<dbReference type="HAMAP" id="MF_00051">
    <property type="entry name" value="SHMT"/>
    <property type="match status" value="1"/>
</dbReference>
<dbReference type="InterPro" id="IPR015424">
    <property type="entry name" value="PyrdxlP-dep_Trfase"/>
</dbReference>
<dbReference type="InterPro" id="IPR015421">
    <property type="entry name" value="PyrdxlP-dep_Trfase_major"/>
</dbReference>
<dbReference type="InterPro" id="IPR015422">
    <property type="entry name" value="PyrdxlP-dep_Trfase_small"/>
</dbReference>
<dbReference type="InterPro" id="IPR001085">
    <property type="entry name" value="Ser_HO-MeTrfase"/>
</dbReference>
<dbReference type="InterPro" id="IPR049943">
    <property type="entry name" value="Ser_HO-MeTrfase-like"/>
</dbReference>
<dbReference type="InterPro" id="IPR019798">
    <property type="entry name" value="Ser_HO-MeTrfase_PLP_BS"/>
</dbReference>
<dbReference type="InterPro" id="IPR039429">
    <property type="entry name" value="SHMT-like_dom"/>
</dbReference>
<dbReference type="NCBIfam" id="NF000586">
    <property type="entry name" value="PRK00011.1"/>
    <property type="match status" value="1"/>
</dbReference>
<dbReference type="PANTHER" id="PTHR11680">
    <property type="entry name" value="SERINE HYDROXYMETHYLTRANSFERASE"/>
    <property type="match status" value="1"/>
</dbReference>
<dbReference type="PANTHER" id="PTHR11680:SF50">
    <property type="entry name" value="SERINE HYDROXYMETHYLTRANSFERASE"/>
    <property type="match status" value="1"/>
</dbReference>
<dbReference type="Pfam" id="PF00464">
    <property type="entry name" value="SHMT"/>
    <property type="match status" value="1"/>
</dbReference>
<dbReference type="PIRSF" id="PIRSF000412">
    <property type="entry name" value="SHMT"/>
    <property type="match status" value="1"/>
</dbReference>
<dbReference type="SUPFAM" id="SSF53383">
    <property type="entry name" value="PLP-dependent transferases"/>
    <property type="match status" value="1"/>
</dbReference>
<dbReference type="PROSITE" id="PS00096">
    <property type="entry name" value="SHMT"/>
    <property type="match status" value="1"/>
</dbReference>
<organism>
    <name type="scientific">Escherichia coli O6:K15:H31 (strain 536 / UPEC)</name>
    <dbReference type="NCBI Taxonomy" id="362663"/>
    <lineage>
        <taxon>Bacteria</taxon>
        <taxon>Pseudomonadati</taxon>
        <taxon>Pseudomonadota</taxon>
        <taxon>Gammaproteobacteria</taxon>
        <taxon>Enterobacterales</taxon>
        <taxon>Enterobacteriaceae</taxon>
        <taxon>Escherichia</taxon>
    </lineage>
</organism>